<evidence type="ECO:0000255" key="1">
    <source>
        <dbReference type="HAMAP-Rule" id="MF_00478"/>
    </source>
</evidence>
<feature type="chain" id="PRO_1000125856" description="Ion-translocating oxidoreductase complex subunit E">
    <location>
        <begin position="1"/>
        <end position="232"/>
    </location>
</feature>
<feature type="transmembrane region" description="Helical" evidence="1">
    <location>
        <begin position="39"/>
        <end position="59"/>
    </location>
</feature>
<feature type="transmembrane region" description="Helical" evidence="1">
    <location>
        <begin position="69"/>
        <end position="89"/>
    </location>
</feature>
<feature type="transmembrane region" description="Helical" evidence="1">
    <location>
        <begin position="92"/>
        <end position="112"/>
    </location>
</feature>
<feature type="transmembrane region" description="Helical" evidence="1">
    <location>
        <begin position="125"/>
        <end position="145"/>
    </location>
</feature>
<feature type="transmembrane region" description="Helical" evidence="1">
    <location>
        <begin position="182"/>
        <end position="202"/>
    </location>
</feature>
<reference key="1">
    <citation type="journal article" date="2008" name="PLoS Genet.">
        <title>Complete genome sequence of the N2-fixing broad host range endophyte Klebsiella pneumoniae 342 and virulence predictions verified in mice.</title>
        <authorList>
            <person name="Fouts D.E."/>
            <person name="Tyler H.L."/>
            <person name="DeBoy R.T."/>
            <person name="Daugherty S."/>
            <person name="Ren Q."/>
            <person name="Badger J.H."/>
            <person name="Durkin A.S."/>
            <person name="Huot H."/>
            <person name="Shrivastava S."/>
            <person name="Kothari S."/>
            <person name="Dodson R.J."/>
            <person name="Mohamoud Y."/>
            <person name="Khouri H."/>
            <person name="Roesch L.F.W."/>
            <person name="Krogfelt K.A."/>
            <person name="Struve C."/>
            <person name="Triplett E.W."/>
            <person name="Methe B.A."/>
        </authorList>
    </citation>
    <scope>NUCLEOTIDE SEQUENCE [LARGE SCALE GENOMIC DNA]</scope>
    <source>
        <strain>342</strain>
    </source>
</reference>
<protein>
    <recommendedName>
        <fullName evidence="1">Ion-translocating oxidoreductase complex subunit E</fullName>
        <ecNumber evidence="1">7.-.-.-</ecNumber>
    </recommendedName>
    <alternativeName>
        <fullName evidence="1">Rnf electron transport complex subunit E</fullName>
    </alternativeName>
</protein>
<dbReference type="EC" id="7.-.-.-" evidence="1"/>
<dbReference type="EMBL" id="CP000964">
    <property type="protein sequence ID" value="ACI07458.1"/>
    <property type="molecule type" value="Genomic_DNA"/>
</dbReference>
<dbReference type="SMR" id="B5XWP6"/>
<dbReference type="KEGG" id="kpe:KPK_2379"/>
<dbReference type="HOGENOM" id="CLU_046659_1_0_6"/>
<dbReference type="Proteomes" id="UP000001734">
    <property type="component" value="Chromosome"/>
</dbReference>
<dbReference type="GO" id="GO:0005886">
    <property type="term" value="C:plasma membrane"/>
    <property type="evidence" value="ECO:0007669"/>
    <property type="project" value="UniProtKB-SubCell"/>
</dbReference>
<dbReference type="GO" id="GO:0022900">
    <property type="term" value="P:electron transport chain"/>
    <property type="evidence" value="ECO:0007669"/>
    <property type="project" value="UniProtKB-UniRule"/>
</dbReference>
<dbReference type="HAMAP" id="MF_00478">
    <property type="entry name" value="RsxE_RnfE"/>
    <property type="match status" value="1"/>
</dbReference>
<dbReference type="InterPro" id="IPR003667">
    <property type="entry name" value="NqrDE/RnfAE"/>
</dbReference>
<dbReference type="InterPro" id="IPR010968">
    <property type="entry name" value="RnfE"/>
</dbReference>
<dbReference type="NCBIfam" id="NF009070">
    <property type="entry name" value="PRK12405.1"/>
    <property type="match status" value="1"/>
</dbReference>
<dbReference type="NCBIfam" id="TIGR01948">
    <property type="entry name" value="rnfE"/>
    <property type="match status" value="1"/>
</dbReference>
<dbReference type="PANTHER" id="PTHR30586">
    <property type="entry name" value="ELECTRON TRANSPORT COMPLEX PROTEIN RNFE"/>
    <property type="match status" value="1"/>
</dbReference>
<dbReference type="PANTHER" id="PTHR30586:SF0">
    <property type="entry name" value="ION-TRANSLOCATING OXIDOREDUCTASE COMPLEX SUBUNIT E"/>
    <property type="match status" value="1"/>
</dbReference>
<dbReference type="Pfam" id="PF02508">
    <property type="entry name" value="Rnf-Nqr"/>
    <property type="match status" value="1"/>
</dbReference>
<dbReference type="PIRSF" id="PIRSF006102">
    <property type="entry name" value="NQR_DE"/>
    <property type="match status" value="1"/>
</dbReference>
<gene>
    <name evidence="1" type="primary">rnfE</name>
    <name type="ordered locus">KPK_2379</name>
</gene>
<name>RNFE_KLEP3</name>
<sequence>MSEVKDVIVQGLWKNNSALVQLLGMCPLLAVTSTATNALGLGLATTLVLTLTNLTISSLRRWTPAEIRIPIYVMIIASVVSVVQMLINAYAFGLYQSLGIFIPLIVTNCIVVGRAEAFAAKKGPALSALDGFSIGMGATCAMFVLGSLREILGNGTLFDGADSLLGSWAKVLRIEVFHTDTPFLLAMLPPGAFIGLGMMLAVKYLIDERSKQRKARAARAVSVAPADVTGKA</sequence>
<accession>B5XWP6</accession>
<organism>
    <name type="scientific">Klebsiella pneumoniae (strain 342)</name>
    <dbReference type="NCBI Taxonomy" id="507522"/>
    <lineage>
        <taxon>Bacteria</taxon>
        <taxon>Pseudomonadati</taxon>
        <taxon>Pseudomonadota</taxon>
        <taxon>Gammaproteobacteria</taxon>
        <taxon>Enterobacterales</taxon>
        <taxon>Enterobacteriaceae</taxon>
        <taxon>Klebsiella/Raoultella group</taxon>
        <taxon>Klebsiella</taxon>
        <taxon>Klebsiella pneumoniae complex</taxon>
    </lineage>
</organism>
<proteinExistence type="inferred from homology"/>
<comment type="function">
    <text evidence="1">Part of a membrane-bound complex that couples electron transfer with translocation of ions across the membrane.</text>
</comment>
<comment type="subunit">
    <text evidence="1">The complex is composed of six subunits: RnfA, RnfB, RnfC, RnfD, RnfE and RnfG.</text>
</comment>
<comment type="subcellular location">
    <subcellularLocation>
        <location evidence="1">Cell inner membrane</location>
        <topology evidence="1">Multi-pass membrane protein</topology>
    </subcellularLocation>
</comment>
<comment type="similarity">
    <text evidence="1">Belongs to the NqrDE/RnfAE family.</text>
</comment>
<keyword id="KW-0997">Cell inner membrane</keyword>
<keyword id="KW-1003">Cell membrane</keyword>
<keyword id="KW-0249">Electron transport</keyword>
<keyword id="KW-0472">Membrane</keyword>
<keyword id="KW-1278">Translocase</keyword>
<keyword id="KW-0812">Transmembrane</keyword>
<keyword id="KW-1133">Transmembrane helix</keyword>
<keyword id="KW-0813">Transport</keyword>